<gene>
    <name type="primary">faeI</name>
</gene>
<organism>
    <name type="scientific">Escherichia coli</name>
    <dbReference type="NCBI Taxonomy" id="562"/>
    <lineage>
        <taxon>Bacteria</taxon>
        <taxon>Pseudomonadati</taxon>
        <taxon>Pseudomonadota</taxon>
        <taxon>Gammaproteobacteria</taxon>
        <taxon>Enterobacterales</taxon>
        <taxon>Enterobacteriaceae</taxon>
        <taxon>Escherichia</taxon>
    </lineage>
</organism>
<name>FAEI_ECOLX</name>
<evidence type="ECO:0000255" key="1"/>
<evidence type="ECO:0000305" key="2"/>
<comment type="function">
    <text>K88 minor fimbrial subunit, plays an essential role in the biogenesis of the K88 fimbriae. Fimbriae (also called pili), are polar filaments radiating from the surface of the bacterium to a length of 0.5-1.5 micrometers and numbering 100-300 per cell. They enable bacteria to colonize the epithelium of specific host organs.</text>
</comment>
<comment type="subcellular location">
    <subcellularLocation>
        <location>Fimbrium</location>
    </subcellularLocation>
    <text>Located in or along the K88 fimbrial structure.</text>
</comment>
<comment type="similarity">
    <text evidence="2">Belongs to the fimbrial K88 protein family.</text>
</comment>
<proteinExistence type="inferred from homology"/>
<dbReference type="EMBL" id="Z11700">
    <property type="protein sequence ID" value="CAA77761.1"/>
    <property type="molecule type" value="Genomic_DNA"/>
</dbReference>
<dbReference type="EMBL" id="Z11710">
    <property type="protein sequence ID" value="CAA77772.1"/>
    <property type="molecule type" value="Genomic_DNA"/>
</dbReference>
<dbReference type="PIR" id="F45725">
    <property type="entry name" value="F45725"/>
</dbReference>
<dbReference type="RefSeq" id="WP_000758129.1">
    <property type="nucleotide sequence ID" value="NZ_VTOQ01000027.1"/>
</dbReference>
<dbReference type="SMR" id="P33783"/>
<dbReference type="GO" id="GO:0009289">
    <property type="term" value="C:pilus"/>
    <property type="evidence" value="ECO:0007669"/>
    <property type="project" value="UniProtKB-SubCell"/>
</dbReference>
<dbReference type="GO" id="GO:0007155">
    <property type="term" value="P:cell adhesion"/>
    <property type="evidence" value="ECO:0007669"/>
    <property type="project" value="InterPro"/>
</dbReference>
<dbReference type="InterPro" id="IPR003467">
    <property type="entry name" value="Fimbrial_K88_FaeH"/>
</dbReference>
<dbReference type="Pfam" id="PF02432">
    <property type="entry name" value="Fimbrial_K88"/>
    <property type="match status" value="1"/>
</dbReference>
<sequence length="254" mass="26993">MKKVTLFLFVVSLLPSTVLAWNTPGEDFSGELKLEGAVTSTRNPWVWKVGQGNESLEVKQSRGVRDGEQGIPVALPALTVLLGKTTLTTPAGREGLSPGVSYGKGAEGFSLEWTAPGMAKVTLPVTGDKNVRAGTFTFRMQAAGVLRHMQDGQPVYTGVYDDLNANGLPGESTAMKTSDIPGTLQTMFSGEGPSWLQTMTVSGYSGVSHFSDASLRQVEGVYGAQIVAGGGELHLNGAMPERWRVSLPVSIEYQ</sequence>
<keyword id="KW-0281">Fimbrium</keyword>
<keyword id="KW-0614">Plasmid</keyword>
<keyword id="KW-0732">Signal</keyword>
<protein>
    <recommendedName>
        <fullName>K88 minor fimbrial subunit FaeI</fullName>
    </recommendedName>
</protein>
<feature type="signal peptide" evidence="1">
    <location>
        <begin position="1"/>
        <end position="20"/>
    </location>
</feature>
<feature type="chain" id="PRO_0000009244" description="K88 minor fimbrial subunit FaeI">
    <location>
        <begin position="21"/>
        <end position="254"/>
    </location>
</feature>
<geneLocation type="plasmid">
    <name>pFM205</name>
</geneLocation>
<reference key="1">
    <citation type="journal article" date="1992" name="J. Bacteriol.">
        <title>Identification of minor fimbrial subunits involved in biosynthesis of K88 fimbriae.</title>
        <authorList>
            <person name="Bakker D."/>
            <person name="Willemsen P.T.J."/>
            <person name="Willems R.H."/>
            <person name="Huisman T.T."/>
            <person name="Mooi F.R."/>
            <person name="Oudega B."/>
            <person name="Stegehuis F."/>
            <person name="de Graaf F.K."/>
        </authorList>
    </citation>
    <scope>NUCLEOTIDE SEQUENCE [GENOMIC DNA]</scope>
</reference>
<accession>P33783</accession>